<evidence type="ECO:0000255" key="1">
    <source>
        <dbReference type="HAMAP-Rule" id="MF_01390"/>
    </source>
</evidence>
<accession>O47164</accession>
<proteinExistence type="inferred from homology"/>
<protein>
    <recommendedName>
        <fullName evidence="1">Maturase K</fullName>
    </recommendedName>
    <alternativeName>
        <fullName evidence="1">Intron maturase</fullName>
    </alternativeName>
</protein>
<keyword id="KW-0150">Chloroplast</keyword>
<keyword id="KW-0507">mRNA processing</keyword>
<keyword id="KW-0934">Plastid</keyword>
<keyword id="KW-0694">RNA-binding</keyword>
<keyword id="KW-0819">tRNA processing</keyword>
<feature type="chain" id="PRO_0000143463" description="Maturase K">
    <location>
        <begin position="1"/>
        <end position="507"/>
    </location>
</feature>
<name>MATK_KALBU</name>
<reference key="1">
    <citation type="journal article" date="1997" name="Am. J. Bot.">
        <title>Phylogenetics relationships of Rhododendroideae (Ericaceae).</title>
        <authorList>
            <person name="Kron K.A."/>
        </authorList>
    </citation>
    <scope>NUCLEOTIDE SEQUENCE [GENOMIC DNA]</scope>
</reference>
<organism>
    <name type="scientific">Kalmia buxifolia</name>
    <name type="common">Sand myrtle</name>
    <name type="synonym">Leiophyllum buxifolium</name>
    <dbReference type="NCBI Taxonomy" id="13585"/>
    <lineage>
        <taxon>Eukaryota</taxon>
        <taxon>Viridiplantae</taxon>
        <taxon>Streptophyta</taxon>
        <taxon>Embryophyta</taxon>
        <taxon>Tracheophyta</taxon>
        <taxon>Spermatophyta</taxon>
        <taxon>Magnoliopsida</taxon>
        <taxon>eudicotyledons</taxon>
        <taxon>Gunneridae</taxon>
        <taxon>Pentapetalae</taxon>
        <taxon>asterids</taxon>
        <taxon>Ericales</taxon>
        <taxon>Ericaceae</taxon>
        <taxon>Ericoideae</taxon>
        <taxon>Phyllodoceae</taxon>
        <taxon>Kalmia</taxon>
    </lineage>
</organism>
<gene>
    <name evidence="1" type="primary">matK</name>
</gene>
<comment type="function">
    <text evidence="1">Usually encoded in the trnK tRNA gene intron. Probably assists in splicing its own and other chloroplast group II introns.</text>
</comment>
<comment type="subcellular location">
    <subcellularLocation>
        <location>Plastid</location>
        <location>Chloroplast</location>
    </subcellularLocation>
</comment>
<comment type="similarity">
    <text evidence="1">Belongs to the intron maturase 2 family. MatK subfamily.</text>
</comment>
<geneLocation type="chloroplast"/>
<sequence length="507" mass="60765">MEQFKIDLNLGRSQQHDFIYPLIFQEYIYALAHDRGLNRSIFLENAGYDNKFSLLIVKRLITHLITQMYQQNHFLFSVNDSNQKKILGYNTNLYSQMIFEGFAVVVEIPFYLRLLSFLEGKERMKSHNLRSIHSIFPFLEDKFAFLNYVLDIQIPHPIHLEILIQTLRYWVKDASSLHLLRFFLHEYPIWNSFLIRKKSSFSFSKRNQRFFFFLYNFHVCEYESIFVFLRNQSSHLRSISYETFLERISFYRKIELEEVFTKDFKAILWVFKEPFLHYVRYRGNALLASKGTSLLMNKWKHYIVNFWQCYFYIWSQPRRIDINQLSNHSLDFLGYLSSVRLKHLMVRSQMIENSFLIENASKKFDTLMPITPMIGSLSKAKFCNVLGHPMSKPAWSALSDSDIIERFGCIYRNLSHYYSGSLKKRNLYRIKYILRLSCARTLARKHKSTVRLFLKRLGMGLLEEFFTGEEQVFYLTLPKASSTSGELYRRRVWYLDIICINHISNYE</sequence>
<dbReference type="EMBL" id="U61347">
    <property type="protein sequence ID" value="AAB93731.1"/>
    <property type="molecule type" value="Genomic_DNA"/>
</dbReference>
<dbReference type="GO" id="GO:0009507">
    <property type="term" value="C:chloroplast"/>
    <property type="evidence" value="ECO:0007669"/>
    <property type="project" value="UniProtKB-SubCell"/>
</dbReference>
<dbReference type="GO" id="GO:0003723">
    <property type="term" value="F:RNA binding"/>
    <property type="evidence" value="ECO:0007669"/>
    <property type="project" value="UniProtKB-KW"/>
</dbReference>
<dbReference type="GO" id="GO:0006397">
    <property type="term" value="P:mRNA processing"/>
    <property type="evidence" value="ECO:0007669"/>
    <property type="project" value="UniProtKB-KW"/>
</dbReference>
<dbReference type="GO" id="GO:0008380">
    <property type="term" value="P:RNA splicing"/>
    <property type="evidence" value="ECO:0007669"/>
    <property type="project" value="UniProtKB-UniRule"/>
</dbReference>
<dbReference type="GO" id="GO:0008033">
    <property type="term" value="P:tRNA processing"/>
    <property type="evidence" value="ECO:0007669"/>
    <property type="project" value="UniProtKB-KW"/>
</dbReference>
<dbReference type="HAMAP" id="MF_01390">
    <property type="entry name" value="MatK"/>
    <property type="match status" value="1"/>
</dbReference>
<dbReference type="InterPro" id="IPR024937">
    <property type="entry name" value="Domain_X"/>
</dbReference>
<dbReference type="InterPro" id="IPR002866">
    <property type="entry name" value="Maturase_MatK"/>
</dbReference>
<dbReference type="InterPro" id="IPR024942">
    <property type="entry name" value="Maturase_MatK_N"/>
</dbReference>
<dbReference type="PANTHER" id="PTHR34811">
    <property type="entry name" value="MATURASE K"/>
    <property type="match status" value="1"/>
</dbReference>
<dbReference type="PANTHER" id="PTHR34811:SF1">
    <property type="entry name" value="MATURASE K"/>
    <property type="match status" value="1"/>
</dbReference>
<dbReference type="Pfam" id="PF01348">
    <property type="entry name" value="Intron_maturas2"/>
    <property type="match status" value="1"/>
</dbReference>
<dbReference type="Pfam" id="PF01824">
    <property type="entry name" value="MatK_N"/>
    <property type="match status" value="1"/>
</dbReference>